<feature type="chain" id="PRO_0000238500" description="Polyadenylation factor subunit 2">
    <location>
        <begin position="1"/>
        <end position="712"/>
    </location>
</feature>
<feature type="repeat" description="WD 1">
    <location>
        <begin position="131"/>
        <end position="170"/>
    </location>
</feature>
<feature type="repeat" description="WD 2">
    <location>
        <begin position="173"/>
        <end position="213"/>
    </location>
</feature>
<feature type="repeat" description="WD 3">
    <location>
        <begin position="214"/>
        <end position="253"/>
    </location>
</feature>
<feature type="repeat" description="WD 4">
    <location>
        <begin position="256"/>
        <end position="295"/>
    </location>
</feature>
<feature type="repeat" description="WD 5">
    <location>
        <begin position="298"/>
        <end position="337"/>
    </location>
</feature>
<feature type="repeat" description="WD 6">
    <location>
        <begin position="340"/>
        <end position="380"/>
    </location>
</feature>
<feature type="repeat" description="WD 7">
    <location>
        <begin position="387"/>
        <end position="426"/>
    </location>
</feature>
<feature type="region of interest" description="Disordered" evidence="2">
    <location>
        <begin position="1"/>
        <end position="37"/>
    </location>
</feature>
<feature type="region of interest" description="Disordered" evidence="2">
    <location>
        <begin position="446"/>
        <end position="473"/>
    </location>
</feature>
<feature type="region of interest" description="Disordered" evidence="2">
    <location>
        <begin position="489"/>
        <end position="712"/>
    </location>
</feature>
<feature type="compositionally biased region" description="Gly residues" evidence="2">
    <location>
        <begin position="460"/>
        <end position="469"/>
    </location>
</feature>
<feature type="compositionally biased region" description="Gly residues" evidence="2">
    <location>
        <begin position="494"/>
        <end position="504"/>
    </location>
</feature>
<feature type="compositionally biased region" description="Low complexity" evidence="2">
    <location>
        <begin position="533"/>
        <end position="545"/>
    </location>
</feature>
<feature type="compositionally biased region" description="Basic and acidic residues" evidence="2">
    <location>
        <begin position="565"/>
        <end position="592"/>
    </location>
</feature>
<feature type="compositionally biased region" description="Pro residues" evidence="2">
    <location>
        <begin position="603"/>
        <end position="612"/>
    </location>
</feature>
<feature type="compositionally biased region" description="Pro residues" evidence="2">
    <location>
        <begin position="619"/>
        <end position="671"/>
    </location>
</feature>
<feature type="compositionally biased region" description="Gly residues" evidence="2">
    <location>
        <begin position="678"/>
        <end position="712"/>
    </location>
</feature>
<keyword id="KW-0159">Chromosome partition</keyword>
<keyword id="KW-0507">mRNA processing</keyword>
<keyword id="KW-0539">Nucleus</keyword>
<keyword id="KW-1185">Reference proteome</keyword>
<keyword id="KW-0677">Repeat</keyword>
<keyword id="KW-0853">WD repeat</keyword>
<evidence type="ECO:0000250" key="1"/>
<evidence type="ECO:0000256" key="2">
    <source>
        <dbReference type="SAM" id="MobiDB-lite"/>
    </source>
</evidence>
<comment type="function">
    <text evidence="1">Required for 3'-end cleavage and polyadenylation of pre-mRNAs. Also involved in chromosome segregation where it has a role in chromosome attachment to the mitotic spindle (By similarity).</text>
</comment>
<comment type="subcellular location">
    <subcellularLocation>
        <location evidence="1">Nucleus</location>
    </subcellularLocation>
</comment>
<name>PFS2_CRYNJ</name>
<sequence length="712" mass="76530">MTAPTVPADQHGHPLPGPADPAANDTWRPSRYREPLHPDNEEVLEQAAYQAAVTRSSGDDRKRKIKPRRTVDYQGGVQKWRMLNKLKGVHEFRPAIHPNPSDIVNFLPPVALRSNPSTSICDYWVHTSINKERSPTRVVRWTPDARRLLTGNDKGQFTLWNGASFNYESITQVHDDSIRSFTYSHNGQALVSADKGGTIKYFTPHLTNIHGFQGHREACHDVSWSPNDERFVTCGDDGLVKIWSYREAKEERSLSGHGWDVRCVDWHPTKGLIVSGSKDMLVKFWDPRTGKDLSTLHSSKSTINTCRWSPDGHLVATAGQDSVIRLFDIRTFRELEVLKGHEKEVNCIEWHPIHHSLLVSGDALGTINYFSLLSPTPSTPITTLSAAHEDAVFSLSFHPLGHILCSGSKDFTARFWCRARPPGGQEFDKWHLTEEGAAQKELERITKREWGTNAPPANAAGGGGGGGGDKQQVALPGLSNLVAAVNSVKTGPTTTGGGPSGLPGLGAPNVHAGTPPSRVSTPSSMGPPGPGAQGQAQGGQFPRGRSALPSQNDMLRHNHGSRGGFADRDRNGGGDRGGMDRDRDSRGGRQDPRGNQMYGRGPGGPPPGPPPGQGGYNYPPAPPNYPPYPPSSYPPPPNNQPGYPPAPNYAMPPGPGAPPQSYPYNRPPQGPPQNNNPGGQGNYGASASGGYGQYGGGGGGGGGGGYGRDGRR</sequence>
<accession>P0CS46</accession>
<accession>Q55VA1</accession>
<accession>Q5KKY3</accession>
<proteinExistence type="inferred from homology"/>
<dbReference type="EMBL" id="AE017343">
    <property type="protein sequence ID" value="AAW42164.1"/>
    <property type="molecule type" value="Genomic_DNA"/>
</dbReference>
<dbReference type="RefSeq" id="XP_569471.1">
    <property type="nucleotide sequence ID" value="XM_569471.1"/>
</dbReference>
<dbReference type="SMR" id="P0CS46"/>
<dbReference type="FunCoup" id="P0CS46">
    <property type="interactions" value="132"/>
</dbReference>
<dbReference type="STRING" id="214684.P0CS46"/>
<dbReference type="PaxDb" id="214684-P0CS46"/>
<dbReference type="EnsemblFungi" id="AAW42164">
    <property type="protein sequence ID" value="AAW42164"/>
    <property type="gene ID" value="CNC01430"/>
</dbReference>
<dbReference type="GeneID" id="3256507"/>
<dbReference type="KEGG" id="cne:CNC01430"/>
<dbReference type="VEuPathDB" id="FungiDB:CNC01430"/>
<dbReference type="eggNOG" id="KOG0284">
    <property type="taxonomic scope" value="Eukaryota"/>
</dbReference>
<dbReference type="HOGENOM" id="CLU_000288_77_4_1"/>
<dbReference type="InParanoid" id="P0CS46"/>
<dbReference type="OMA" id="HREACHD"/>
<dbReference type="OrthoDB" id="16717at2759"/>
<dbReference type="Proteomes" id="UP000002149">
    <property type="component" value="Chromosome 3"/>
</dbReference>
<dbReference type="GO" id="GO:0005847">
    <property type="term" value="C:mRNA cleavage and polyadenylation specificity factor complex"/>
    <property type="evidence" value="ECO:0000318"/>
    <property type="project" value="GO_Central"/>
</dbReference>
<dbReference type="GO" id="GO:0007059">
    <property type="term" value="P:chromosome segregation"/>
    <property type="evidence" value="ECO:0007669"/>
    <property type="project" value="UniProtKB-KW"/>
</dbReference>
<dbReference type="GO" id="GO:0031124">
    <property type="term" value="P:mRNA 3'-end processing"/>
    <property type="evidence" value="ECO:0007669"/>
    <property type="project" value="InterPro"/>
</dbReference>
<dbReference type="CDD" id="cd00200">
    <property type="entry name" value="WD40"/>
    <property type="match status" value="1"/>
</dbReference>
<dbReference type="FunFam" id="2.130.10.10:FF:002100">
    <property type="entry name" value="Unplaced genomic scaffold supercont1.23, whole genome shotgun sequence"/>
    <property type="match status" value="1"/>
</dbReference>
<dbReference type="FunFam" id="2.130.10.10:FF:000069">
    <property type="entry name" value="WD repeat domain 33"/>
    <property type="match status" value="1"/>
</dbReference>
<dbReference type="Gene3D" id="2.130.10.10">
    <property type="entry name" value="YVTN repeat-like/Quinoprotein amine dehydrogenase"/>
    <property type="match status" value="3"/>
</dbReference>
<dbReference type="InterPro" id="IPR045245">
    <property type="entry name" value="Pfs2-like"/>
</dbReference>
<dbReference type="InterPro" id="IPR015943">
    <property type="entry name" value="WD40/YVTN_repeat-like_dom_sf"/>
</dbReference>
<dbReference type="InterPro" id="IPR036322">
    <property type="entry name" value="WD40_repeat_dom_sf"/>
</dbReference>
<dbReference type="InterPro" id="IPR001680">
    <property type="entry name" value="WD40_rpt"/>
</dbReference>
<dbReference type="PANTHER" id="PTHR22836:SF0">
    <property type="entry name" value="PRE-MRNA 3' END PROCESSING PROTEIN WDR33"/>
    <property type="match status" value="1"/>
</dbReference>
<dbReference type="PANTHER" id="PTHR22836">
    <property type="entry name" value="WD40 REPEAT PROTEIN"/>
    <property type="match status" value="1"/>
</dbReference>
<dbReference type="Pfam" id="PF00400">
    <property type="entry name" value="WD40"/>
    <property type="match status" value="6"/>
</dbReference>
<dbReference type="SMART" id="SM00320">
    <property type="entry name" value="WD40"/>
    <property type="match status" value="7"/>
</dbReference>
<dbReference type="SUPFAM" id="SSF50978">
    <property type="entry name" value="WD40 repeat-like"/>
    <property type="match status" value="1"/>
</dbReference>
<dbReference type="PROSITE" id="PS50082">
    <property type="entry name" value="WD_REPEATS_2"/>
    <property type="match status" value="4"/>
</dbReference>
<dbReference type="PROSITE" id="PS50294">
    <property type="entry name" value="WD_REPEATS_REGION"/>
    <property type="match status" value="1"/>
</dbReference>
<gene>
    <name type="primary">PFS2</name>
    <name type="ordered locus">CNC01430</name>
</gene>
<protein>
    <recommendedName>
        <fullName>Polyadenylation factor subunit 2</fullName>
    </recommendedName>
</protein>
<reference key="1">
    <citation type="journal article" date="2005" name="Science">
        <title>The genome of the basidiomycetous yeast and human pathogen Cryptococcus neoformans.</title>
        <authorList>
            <person name="Loftus B.J."/>
            <person name="Fung E."/>
            <person name="Roncaglia P."/>
            <person name="Rowley D."/>
            <person name="Amedeo P."/>
            <person name="Bruno D."/>
            <person name="Vamathevan J."/>
            <person name="Miranda M."/>
            <person name="Anderson I.J."/>
            <person name="Fraser J.A."/>
            <person name="Allen J.E."/>
            <person name="Bosdet I.E."/>
            <person name="Brent M.R."/>
            <person name="Chiu R."/>
            <person name="Doering T.L."/>
            <person name="Donlin M.J."/>
            <person name="D'Souza C.A."/>
            <person name="Fox D.S."/>
            <person name="Grinberg V."/>
            <person name="Fu J."/>
            <person name="Fukushima M."/>
            <person name="Haas B.J."/>
            <person name="Huang J.C."/>
            <person name="Janbon G."/>
            <person name="Jones S.J.M."/>
            <person name="Koo H.L."/>
            <person name="Krzywinski M.I."/>
            <person name="Kwon-Chung K.J."/>
            <person name="Lengeler K.B."/>
            <person name="Maiti R."/>
            <person name="Marra M.A."/>
            <person name="Marra R.E."/>
            <person name="Mathewson C.A."/>
            <person name="Mitchell T.G."/>
            <person name="Pertea M."/>
            <person name="Riggs F.R."/>
            <person name="Salzberg S.L."/>
            <person name="Schein J.E."/>
            <person name="Shvartsbeyn A."/>
            <person name="Shin H."/>
            <person name="Shumway M."/>
            <person name="Specht C.A."/>
            <person name="Suh B.B."/>
            <person name="Tenney A."/>
            <person name="Utterback T.R."/>
            <person name="Wickes B.L."/>
            <person name="Wortman J.R."/>
            <person name="Wye N.H."/>
            <person name="Kronstad J.W."/>
            <person name="Lodge J.K."/>
            <person name="Heitman J."/>
            <person name="Davis R.W."/>
            <person name="Fraser C.M."/>
            <person name="Hyman R.W."/>
        </authorList>
    </citation>
    <scope>NUCLEOTIDE SEQUENCE [LARGE SCALE GENOMIC DNA]</scope>
    <source>
        <strain>JEC21 / ATCC MYA-565</strain>
    </source>
</reference>
<organism>
    <name type="scientific">Cryptococcus neoformans var. neoformans serotype D (strain JEC21 / ATCC MYA-565)</name>
    <name type="common">Filobasidiella neoformans</name>
    <dbReference type="NCBI Taxonomy" id="214684"/>
    <lineage>
        <taxon>Eukaryota</taxon>
        <taxon>Fungi</taxon>
        <taxon>Dikarya</taxon>
        <taxon>Basidiomycota</taxon>
        <taxon>Agaricomycotina</taxon>
        <taxon>Tremellomycetes</taxon>
        <taxon>Tremellales</taxon>
        <taxon>Cryptococcaceae</taxon>
        <taxon>Cryptococcus</taxon>
        <taxon>Cryptococcus neoformans species complex</taxon>
    </lineage>
</organism>